<keyword id="KW-0560">Oxidoreductase</keyword>
<keyword id="KW-1185">Reference proteome</keyword>
<accession>Q4J915</accession>
<comment type="function">
    <text evidence="1">The glycine cleavage system catalyzes the degradation of glycine. The P protein binds the alpha-amino group of glycine through its pyridoxal phosphate cofactor; CO(2) is released and the remaining methylamine moiety is then transferred to the lipoamide cofactor of the H protein.</text>
</comment>
<comment type="catalytic activity">
    <reaction evidence="1">
        <text>N(6)-[(R)-lipoyl]-L-lysyl-[glycine-cleavage complex H protein] + glycine + H(+) = N(6)-[(R)-S(8)-aminomethyldihydrolipoyl]-L-lysyl-[glycine-cleavage complex H protein] + CO2</text>
        <dbReference type="Rhea" id="RHEA:24304"/>
        <dbReference type="Rhea" id="RHEA-COMP:10494"/>
        <dbReference type="Rhea" id="RHEA-COMP:10495"/>
        <dbReference type="ChEBI" id="CHEBI:15378"/>
        <dbReference type="ChEBI" id="CHEBI:16526"/>
        <dbReference type="ChEBI" id="CHEBI:57305"/>
        <dbReference type="ChEBI" id="CHEBI:83099"/>
        <dbReference type="ChEBI" id="CHEBI:83143"/>
        <dbReference type="EC" id="1.4.4.2"/>
    </reaction>
</comment>
<comment type="subunit">
    <text evidence="1">The glycine cleavage system is composed of four proteins: P, T, L and H. In this organism, the P 'protein' is a heterodimer of two subunits.</text>
</comment>
<comment type="similarity">
    <text evidence="1">Belongs to the GcvP family. N-terminal subunit subfamily.</text>
</comment>
<evidence type="ECO:0000255" key="1">
    <source>
        <dbReference type="HAMAP-Rule" id="MF_00712"/>
    </source>
</evidence>
<gene>
    <name evidence="1" type="primary">gcvPA</name>
    <name type="ordered locus">Saci_1382</name>
</gene>
<name>GCSPA_SULAC</name>
<protein>
    <recommendedName>
        <fullName evidence="1">Probable glycine dehydrogenase (decarboxylating) subunit 1</fullName>
        <ecNumber evidence="1">1.4.4.2</ecNumber>
    </recommendedName>
    <alternativeName>
        <fullName evidence="1">Glycine cleavage system P-protein subunit 1</fullName>
    </alternativeName>
    <alternativeName>
        <fullName evidence="1">Glycine decarboxylase subunit 1</fullName>
    </alternativeName>
    <alternativeName>
        <fullName evidence="1">Glycine dehydrogenase (aminomethyl-transferring) subunit 1</fullName>
    </alternativeName>
</protein>
<feature type="chain" id="PRO_0000166988" description="Probable glycine dehydrogenase (decarboxylating) subunit 1">
    <location>
        <begin position="1"/>
        <end position="447"/>
    </location>
</feature>
<sequence length="447" mass="51227">MEMHPWLPNLKYTEEMLKEIGVNDIMNLFSDVPQDLILKRKLNIPYDKPLSEYEISQRLNELKKKNLELKYPPFIGGGLCPHYIPEAVKFIMSRSEFYTAYTPYQPEISQGLLQAIYEYQSLMAELLEMEFVNASMYDWASAIAEAVLMAHRINRRKSVLLPSNMNPYHREVVKTWVYGKGIRITELPTDSTSGQIDIEKLEQINTDDVSAIYIQQPNFYGIFEENIEYIVDFAKKKNIITIMGVSPLSLGLIKPPGEYGIDIAVGDGQEIGLPLNYGGPLMGIFAVRWDSQLVRQMPGRIVGLTKDEKGNRAFTLILQTREQFTRREKATSNITTNETLMAIGSAVYLSLLGKHGLRDLAEEIYVRSHYAKKKFEELGFKSPYSGEFFEEFVIQFPKNYNLIHSSLLNKRIHGGLQLNDYCALFCFTEVHTRVMIDELVKSIAEVL</sequence>
<organism>
    <name type="scientific">Sulfolobus acidocaldarius (strain ATCC 33909 / DSM 639 / JCM 8929 / NBRC 15157 / NCIMB 11770)</name>
    <dbReference type="NCBI Taxonomy" id="330779"/>
    <lineage>
        <taxon>Archaea</taxon>
        <taxon>Thermoproteota</taxon>
        <taxon>Thermoprotei</taxon>
        <taxon>Sulfolobales</taxon>
        <taxon>Sulfolobaceae</taxon>
        <taxon>Sulfolobus</taxon>
    </lineage>
</organism>
<proteinExistence type="inferred from homology"/>
<reference key="1">
    <citation type="journal article" date="2005" name="J. Bacteriol.">
        <title>The genome of Sulfolobus acidocaldarius, a model organism of the Crenarchaeota.</title>
        <authorList>
            <person name="Chen L."/>
            <person name="Bruegger K."/>
            <person name="Skovgaard M."/>
            <person name="Redder P."/>
            <person name="She Q."/>
            <person name="Torarinsson E."/>
            <person name="Greve B."/>
            <person name="Awayez M."/>
            <person name="Zibat A."/>
            <person name="Klenk H.-P."/>
            <person name="Garrett R.A."/>
        </authorList>
    </citation>
    <scope>NUCLEOTIDE SEQUENCE [LARGE SCALE GENOMIC DNA]</scope>
    <source>
        <strain>ATCC 33909 / DSM 639 / JCM 8929 / NBRC 15157 / NCIMB 11770</strain>
    </source>
</reference>
<dbReference type="EC" id="1.4.4.2" evidence="1"/>
<dbReference type="EMBL" id="CP000077">
    <property type="protein sequence ID" value="AAY80715.1"/>
    <property type="molecule type" value="Genomic_DNA"/>
</dbReference>
<dbReference type="RefSeq" id="WP_011278217.1">
    <property type="nucleotide sequence ID" value="NC_007181.1"/>
</dbReference>
<dbReference type="SMR" id="Q4J915"/>
<dbReference type="STRING" id="330779.Saci_1382"/>
<dbReference type="GeneID" id="14551883"/>
<dbReference type="GeneID" id="78441727"/>
<dbReference type="KEGG" id="sai:Saci_1382"/>
<dbReference type="PATRIC" id="fig|330779.12.peg.1334"/>
<dbReference type="eggNOG" id="arCOG00077">
    <property type="taxonomic scope" value="Archaea"/>
</dbReference>
<dbReference type="HOGENOM" id="CLU_004620_0_2_2"/>
<dbReference type="Proteomes" id="UP000001018">
    <property type="component" value="Chromosome"/>
</dbReference>
<dbReference type="GO" id="GO:0004375">
    <property type="term" value="F:glycine dehydrogenase (decarboxylating) activity"/>
    <property type="evidence" value="ECO:0007669"/>
    <property type="project" value="UniProtKB-EC"/>
</dbReference>
<dbReference type="GO" id="GO:0019464">
    <property type="term" value="P:glycine decarboxylation via glycine cleavage system"/>
    <property type="evidence" value="ECO:0007669"/>
    <property type="project" value="UniProtKB-UniRule"/>
</dbReference>
<dbReference type="GO" id="GO:0009116">
    <property type="term" value="P:nucleoside metabolic process"/>
    <property type="evidence" value="ECO:0007669"/>
    <property type="project" value="InterPro"/>
</dbReference>
<dbReference type="CDD" id="cd00613">
    <property type="entry name" value="GDC-P"/>
    <property type="match status" value="1"/>
</dbReference>
<dbReference type="Gene3D" id="3.90.1150.10">
    <property type="entry name" value="Aspartate Aminotransferase, domain 1"/>
    <property type="match status" value="1"/>
</dbReference>
<dbReference type="Gene3D" id="3.40.640.10">
    <property type="entry name" value="Type I PLP-dependent aspartate aminotransferase-like (Major domain)"/>
    <property type="match status" value="1"/>
</dbReference>
<dbReference type="HAMAP" id="MF_00712">
    <property type="entry name" value="GcvPA"/>
    <property type="match status" value="1"/>
</dbReference>
<dbReference type="InterPro" id="IPR023010">
    <property type="entry name" value="GcvPA"/>
</dbReference>
<dbReference type="InterPro" id="IPR049315">
    <property type="entry name" value="GDC-P_N"/>
</dbReference>
<dbReference type="InterPro" id="IPR020581">
    <property type="entry name" value="GDC_P"/>
</dbReference>
<dbReference type="InterPro" id="IPR015424">
    <property type="entry name" value="PyrdxlP-dep_Trfase"/>
</dbReference>
<dbReference type="InterPro" id="IPR015421">
    <property type="entry name" value="PyrdxlP-dep_Trfase_major"/>
</dbReference>
<dbReference type="InterPro" id="IPR015422">
    <property type="entry name" value="PyrdxlP-dep_Trfase_small"/>
</dbReference>
<dbReference type="NCBIfam" id="NF001696">
    <property type="entry name" value="PRK00451.1"/>
    <property type="match status" value="1"/>
</dbReference>
<dbReference type="PANTHER" id="PTHR42806">
    <property type="entry name" value="GLYCINE CLEAVAGE SYSTEM P-PROTEIN"/>
    <property type="match status" value="1"/>
</dbReference>
<dbReference type="PANTHER" id="PTHR42806:SF1">
    <property type="entry name" value="GLYCINE DEHYDROGENASE (DECARBOXYLATING)"/>
    <property type="match status" value="1"/>
</dbReference>
<dbReference type="Pfam" id="PF02347">
    <property type="entry name" value="GDC-P"/>
    <property type="match status" value="1"/>
</dbReference>
<dbReference type="PIRSF" id="PIRSF006815">
    <property type="entry name" value="GcvPA"/>
    <property type="match status" value="1"/>
</dbReference>
<dbReference type="SUPFAM" id="SSF53383">
    <property type="entry name" value="PLP-dependent transferases"/>
    <property type="match status" value="1"/>
</dbReference>